<proteinExistence type="inferred from homology"/>
<comment type="RNA editing">
    <location>
        <position position="318" evidence="1"/>
    </location>
    <text evidence="1">Partially edited. RNA editing at this position consists of an insertion of one or two guanine nucleotides. The sequence displayed here is the W protein, derived from the +2G edited RNA. The unedited RNA gives rise to the P protein (AC Q9DUE2), the +1G edited RNA gives rise to the V protein (AC Q9DUE1) (By similarity).</text>
</comment>
<comment type="miscellaneous">
    <text>The P/V/C gene has two overlapping open reading frames. One encodes the P/V/W proteins and the other the C/Y proteins.</text>
</comment>
<name>W_SENDA</name>
<protein>
    <recommendedName>
        <fullName>Protein W</fullName>
    </recommendedName>
</protein>
<dbReference type="EMBL" id="AB039658">
    <property type="status" value="NOT_ANNOTATED_CDS"/>
    <property type="molecule type" value="Genomic_RNA"/>
</dbReference>
<dbReference type="Proteomes" id="UP000180650">
    <property type="component" value="Genome"/>
</dbReference>
<reference key="1">
    <citation type="journal article" date="2001" name="Virus Genes">
        <title>Conserved and non-conserved regions in the Sendai virus genome: evolution of a gene possessing overlapping reading frames.</title>
        <authorList>
            <person name="Fujii Y."/>
            <person name="Kiyotani K."/>
            <person name="Yoshida T."/>
            <person name="Sakaguchi T."/>
        </authorList>
    </citation>
    <scope>NUCLEOTIDE SEQUENCE [GENOMIC RNA]</scope>
</reference>
<accession>P69286</accession>
<keyword id="KW-0597">Phosphoprotein</keyword>
<keyword id="KW-0691">RNA editing</keyword>
<organism>
    <name type="scientific">Sendai virus (strain Hamamatsu)</name>
    <name type="common">SeV</name>
    <dbReference type="NCBI Taxonomy" id="302271"/>
    <lineage>
        <taxon>Viruses</taxon>
        <taxon>Riboviria</taxon>
        <taxon>Orthornavirae</taxon>
        <taxon>Negarnaviricota</taxon>
        <taxon>Haploviricotina</taxon>
        <taxon>Monjiviricetes</taxon>
        <taxon>Mononegavirales</taxon>
        <taxon>Paramyxoviridae</taxon>
        <taxon>Feraresvirinae</taxon>
        <taxon>Respirovirus</taxon>
        <taxon>Respirovirus muris</taxon>
    </lineage>
</organism>
<feature type="chain" id="PRO_0000142833" description="Protein W">
    <location>
        <begin position="1"/>
        <end position="318"/>
    </location>
</feature>
<feature type="region of interest" description="Disordered" evidence="2">
    <location>
        <begin position="1"/>
        <end position="24"/>
    </location>
</feature>
<feature type="region of interest" description="Disordered" evidence="2">
    <location>
        <begin position="38"/>
        <end position="318"/>
    </location>
</feature>
<feature type="compositionally biased region" description="Basic and acidic residues" evidence="2">
    <location>
        <begin position="7"/>
        <end position="20"/>
    </location>
</feature>
<feature type="compositionally biased region" description="Polar residues" evidence="2">
    <location>
        <begin position="50"/>
        <end position="61"/>
    </location>
</feature>
<feature type="compositionally biased region" description="Basic and acidic residues" evidence="2">
    <location>
        <begin position="99"/>
        <end position="110"/>
    </location>
</feature>
<feature type="compositionally biased region" description="Basic and acidic residues" evidence="2">
    <location>
        <begin position="150"/>
        <end position="168"/>
    </location>
</feature>
<feature type="modified residue" description="Phosphoserine; by host" evidence="1">
    <location>
        <position position="249"/>
    </location>
</feature>
<feature type="modified residue" description="Phosphoserine; by host" evidence="1">
    <location>
        <position position="257"/>
    </location>
</feature>
<feature type="modified residue" description="Phosphoserine; by host" evidence="1">
    <location>
        <position position="260"/>
    </location>
</feature>
<sequence length="318" mass="33988">MDQDALISKEDSEVEREASGGRESLSDVIGFLDAVLSSEPTDIGGDRSWLHNTINTLQRPGSTHRAKGEGEGEVSTSSTQDNRSGEESRVSGGTSEPEAEAHARNVDKQNIHWATGRGASTDSVPQDLGNGRDSGILEDPPNEGGYPRSGAEDENREMAANPDKRGEDQAEGLPEEIRRSAPLPDEGEGRADNNGRGVESGSPHSARVTGVLVIPSPELEEAVLQRNKRRPANSGSRSLTPVVVPSTRSPPPDHDNSTRSPPRKPPTTQDEHTNPRNTPAVRIKDRRPPTGTRSAPDRPTDGYPTHPGPETDATKKGA</sequence>
<evidence type="ECO:0000250" key="1"/>
<evidence type="ECO:0000256" key="2">
    <source>
        <dbReference type="SAM" id="MobiDB-lite"/>
    </source>
</evidence>
<gene>
    <name type="primary">P/V/C</name>
</gene>
<organismHost>
    <name type="scientific">Cavia cutleri</name>
    <name type="common">Guinea pig</name>
    <dbReference type="NCBI Taxonomy" id="10144"/>
</organismHost>
<organismHost>
    <name type="scientific">Cricetidae sp.</name>
    <name type="common">Hamster</name>
    <dbReference type="NCBI Taxonomy" id="36483"/>
</organismHost>
<organismHost>
    <name type="scientific">Mus musculus</name>
    <name type="common">Mouse</name>
    <dbReference type="NCBI Taxonomy" id="10090"/>
</organismHost>
<organismHost>
    <name type="scientific">Rattus norvegicus</name>
    <name type="common">Rat</name>
    <dbReference type="NCBI Taxonomy" id="10116"/>
</organismHost>